<accession>P32841</accession>
<accession>D6VZV6</accession>
<comment type="function">
    <text evidence="2 4 5 6">Required for the production of double-strand breaks (DSBs) in meiotic recombination initiation; not required for mitosis. Plays a role in activation of the DSB nuclease SPO11 at recombination hotspots. Prevents accumulation of meiotic double strand break intermediates and is needed for the proper timing of the first meiotic division. Component of the MER2-MEI4-REC114 complex which seems to be required for meiotic double-strand break (DSB) formation.</text>
</comment>
<comment type="subunit">
    <text evidence="3 5">Interacts with MEI4, MER2 and REC104. Component of the MER2-MEI4-REC114 complex.</text>
</comment>
<comment type="interaction">
    <interactant intactId="EBI-14447">
        <id>P32841</id>
    </interactant>
    <interactant intactId="EBI-2566907">
        <id>P29467</id>
        <label>MEI4</label>
    </interactant>
    <organismsDiffer>false</organismsDiffer>
    <experiments>8</experiments>
</comment>
<comment type="interaction">
    <interactant intactId="EBI-14447">
        <id>P32841</id>
    </interactant>
    <interactant intactId="EBI-10742">
        <id>P21651</id>
        <label>REC107</label>
    </interactant>
    <organismsDiffer>false</organismsDiffer>
    <experiments>5</experiments>
</comment>
<comment type="subcellular location">
    <subcellularLocation>
        <location evidence="5">Nucleus</location>
    </subcellularLocation>
    <subcellularLocation>
        <location evidence="5">Chromosome</location>
    </subcellularLocation>
    <text>Localizes to chromosomes.</text>
</comment>
<comment type="developmental stage">
    <text>Meiosis-specific.</text>
</comment>
<comment type="similarity">
    <text evidence="7">Belongs to the REC114 family.</text>
</comment>
<comment type="sequence caution" evidence="7">
    <conflict type="erroneous gene model prediction">
        <sequence resource="EMBL-CDS" id="CAA87347"/>
    </conflict>
</comment>
<gene>
    <name type="primary">REC114</name>
    <name type="ordered locus">YMR133W</name>
    <name type="ORF">YM9375.02</name>
</gene>
<protein>
    <recommendedName>
        <fullName>Meiotic recombination protein REC114</fullName>
    </recommendedName>
</protein>
<evidence type="ECO:0000256" key="1">
    <source>
        <dbReference type="SAM" id="MobiDB-lite"/>
    </source>
</evidence>
<evidence type="ECO:0000269" key="2">
    <source>
    </source>
</evidence>
<evidence type="ECO:0000269" key="3">
    <source>
    </source>
</evidence>
<evidence type="ECO:0000269" key="4">
    <source>
    </source>
</evidence>
<evidence type="ECO:0000269" key="5">
    <source>
    </source>
</evidence>
<evidence type="ECO:0000269" key="6">
    <source>
    </source>
</evidence>
<evidence type="ECO:0000305" key="7"/>
<dbReference type="EMBL" id="Z14315">
    <property type="status" value="NOT_ANNOTATED_CDS"/>
    <property type="molecule type" value="Genomic_DNA"/>
</dbReference>
<dbReference type="EMBL" id="Z47071">
    <property type="protein sequence ID" value="CAA87347.1"/>
    <property type="status" value="ALT_SEQ"/>
    <property type="molecule type" value="Genomic_DNA"/>
</dbReference>
<dbReference type="EMBL" id="BK006946">
    <property type="protein sequence ID" value="DAA10030.1"/>
    <property type="molecule type" value="Genomic_DNA"/>
</dbReference>
<dbReference type="PIR" id="S27453">
    <property type="entry name" value="S27453"/>
</dbReference>
<dbReference type="RefSeq" id="NP_013852.1">
    <property type="nucleotide sequence ID" value="NM_001182634.1"/>
</dbReference>
<dbReference type="SMR" id="P32841"/>
<dbReference type="BioGRID" id="35310">
    <property type="interactions" value="68"/>
</dbReference>
<dbReference type="ComplexPortal" id="CPX-1809">
    <property type="entry name" value="MER2-MEI4-REC114 meiotic recombination initiation complex"/>
</dbReference>
<dbReference type="DIP" id="DIP-4006N"/>
<dbReference type="FunCoup" id="P32841">
    <property type="interactions" value="45"/>
</dbReference>
<dbReference type="IntAct" id="P32841">
    <property type="interactions" value="5"/>
</dbReference>
<dbReference type="STRING" id="4932.YMR133W"/>
<dbReference type="iPTMnet" id="P32841"/>
<dbReference type="PaxDb" id="4932-YMR133W"/>
<dbReference type="PeptideAtlas" id="P32841"/>
<dbReference type="EnsemblFungi" id="YMR133W_mRNA">
    <property type="protein sequence ID" value="YMR133W"/>
    <property type="gene ID" value="YMR133W"/>
</dbReference>
<dbReference type="GeneID" id="855163"/>
<dbReference type="KEGG" id="sce:YMR133W"/>
<dbReference type="AGR" id="SGD:S000004740"/>
<dbReference type="SGD" id="S000004740">
    <property type="gene designation" value="REC114"/>
</dbReference>
<dbReference type="VEuPathDB" id="FungiDB:YMR133W"/>
<dbReference type="eggNOG" id="ENOG502S7Q1">
    <property type="taxonomic scope" value="Eukaryota"/>
</dbReference>
<dbReference type="HOGENOM" id="CLU_704167_0_0_1"/>
<dbReference type="InParanoid" id="P32841"/>
<dbReference type="OMA" id="KSGNTHT"/>
<dbReference type="OrthoDB" id="4036344at2759"/>
<dbReference type="BioCyc" id="YEAST:G3O-32826-MONOMER"/>
<dbReference type="BioGRID-ORCS" id="855163">
    <property type="hits" value="5 hits in 10 CRISPR screens"/>
</dbReference>
<dbReference type="PRO" id="PR:P32841"/>
<dbReference type="Proteomes" id="UP000002311">
    <property type="component" value="Chromosome XIII"/>
</dbReference>
<dbReference type="RNAct" id="P32841">
    <property type="molecule type" value="protein"/>
</dbReference>
<dbReference type="GO" id="GO:0000794">
    <property type="term" value="C:condensed nuclear chromosome"/>
    <property type="evidence" value="ECO:0000314"/>
    <property type="project" value="SGD"/>
</dbReference>
<dbReference type="GO" id="GO:0005634">
    <property type="term" value="C:nucleus"/>
    <property type="evidence" value="ECO:0000303"/>
    <property type="project" value="ComplexPortal"/>
</dbReference>
<dbReference type="GO" id="GO:0042138">
    <property type="term" value="P:meiotic DNA double-strand break formation"/>
    <property type="evidence" value="ECO:0000304"/>
    <property type="project" value="SGD"/>
</dbReference>
<dbReference type="GO" id="GO:0007131">
    <property type="term" value="P:reciprocal meiotic recombination"/>
    <property type="evidence" value="ECO:0000315"/>
    <property type="project" value="SGD"/>
</dbReference>
<dbReference type="InterPro" id="IPR004354">
    <property type="entry name" value="Meiotic_Rec114"/>
</dbReference>
<dbReference type="Pfam" id="PF03525">
    <property type="entry name" value="Meiotic_rec114"/>
    <property type="match status" value="1"/>
</dbReference>
<dbReference type="PRINTS" id="PR01548">
    <property type="entry name" value="MEIOTICR114"/>
</dbReference>
<feature type="chain" id="PRO_0000097219" description="Meiotic recombination protein REC114">
    <location>
        <begin position="1"/>
        <end position="428"/>
    </location>
</feature>
<feature type="region of interest" description="Disordered" evidence="1">
    <location>
        <begin position="255"/>
        <end position="278"/>
    </location>
</feature>
<feature type="region of interest" description="Disordered" evidence="1">
    <location>
        <begin position="307"/>
        <end position="380"/>
    </location>
</feature>
<feature type="compositionally biased region" description="Polar residues" evidence="1">
    <location>
        <begin position="255"/>
        <end position="266"/>
    </location>
</feature>
<feature type="compositionally biased region" description="Polar residues" evidence="1">
    <location>
        <begin position="346"/>
        <end position="355"/>
    </location>
</feature>
<feature type="sequence conflict" description="In Ref. 1." evidence="7" ref="1">
    <original>KY</original>
    <variation>N</variation>
    <location>
        <begin position="96"/>
        <end position="97"/>
    </location>
</feature>
<feature type="sequence conflict" description="In Ref. 1." evidence="7" ref="1">
    <original>EEFG</original>
    <variation>RRIR</variation>
    <location>
        <begin position="100"/>
        <end position="103"/>
    </location>
</feature>
<feature type="sequence conflict" description="In Ref. 1." evidence="7" ref="1">
    <original>S</original>
    <variation>C</variation>
    <location>
        <position position="377"/>
    </location>
</feature>
<sequence length="428" mass="48706">MYEYCSVVIKKYSKYTIPSFAPNGFQSMLEPPQIDKWQHLSANCTLQFRVLLMDSRQILINVVLNNSTLLENIRLPLGDNQDLIQFSCKSPIISCKYISEEFGPRMLRRFQMNLPNDVEFNRTVVSLKNLNFVLRTARTSIAQSTITSQVQGNNNGTKVCFTEGPKVSSYTNPNTQFQTQNMIMDFSQRYQEESERESNNRSNITLPHDSIQIAQQIWPNTDLNVVQSSQDLNTPMATQTVLGRPESLIVQPLEVSQSPPNTTNCLPNAENKKKKVDTTSDFTSRKEIALCKTGLLETIHIPKERESQMQSVTGLDATPTIIWSPGKDNTAKKNTSNKKNIDDKLTNPQKSGNTHTPDRNKEVLPNGTLNETRKEASPSEGLTIRVKNVNRNASRKISKRLIKEKLKDEEFMKWVNKVETVLNKMFEK</sequence>
<keyword id="KW-0158">Chromosome</keyword>
<keyword id="KW-0233">DNA recombination</keyword>
<keyword id="KW-0469">Meiosis</keyword>
<keyword id="KW-0539">Nucleus</keyword>
<keyword id="KW-1185">Reference proteome</keyword>
<name>RE114_YEAST</name>
<organism>
    <name type="scientific">Saccharomyces cerevisiae (strain ATCC 204508 / S288c)</name>
    <name type="common">Baker's yeast</name>
    <dbReference type="NCBI Taxonomy" id="559292"/>
    <lineage>
        <taxon>Eukaryota</taxon>
        <taxon>Fungi</taxon>
        <taxon>Dikarya</taxon>
        <taxon>Ascomycota</taxon>
        <taxon>Saccharomycotina</taxon>
        <taxon>Saccharomycetes</taxon>
        <taxon>Saccharomycetales</taxon>
        <taxon>Saccharomycetaceae</taxon>
        <taxon>Saccharomyces</taxon>
    </lineage>
</organism>
<reference key="1">
    <citation type="journal article" date="1993" name="Curr. Genet.">
        <title>Genetic and molecular analysis of REC114, an early meiotic recombination gene in yeast.</title>
        <authorList>
            <person name="Pittman D.L."/>
            <person name="Lu W."/>
            <person name="Malone R.E."/>
        </authorList>
    </citation>
    <scope>NUCLEOTIDE SEQUENCE [GENOMIC DNA]</scope>
</reference>
<reference key="2">
    <citation type="journal article" date="1997" name="Nature">
        <title>The nucleotide sequence of Saccharomyces cerevisiae chromosome XIII.</title>
        <authorList>
            <person name="Bowman S."/>
            <person name="Churcher C.M."/>
            <person name="Badcock K."/>
            <person name="Brown D."/>
            <person name="Chillingworth T."/>
            <person name="Connor R."/>
            <person name="Dedman K."/>
            <person name="Devlin K."/>
            <person name="Gentles S."/>
            <person name="Hamlin N."/>
            <person name="Hunt S."/>
            <person name="Jagels K."/>
            <person name="Lye G."/>
            <person name="Moule S."/>
            <person name="Odell C."/>
            <person name="Pearson D."/>
            <person name="Rajandream M.A."/>
            <person name="Rice P."/>
            <person name="Skelton J."/>
            <person name="Walsh S.V."/>
            <person name="Whitehead S."/>
            <person name="Barrell B.G."/>
        </authorList>
    </citation>
    <scope>NUCLEOTIDE SEQUENCE [LARGE SCALE GENOMIC DNA]</scope>
    <source>
        <strain>ATCC 204508 / S288c</strain>
    </source>
</reference>
<reference key="3">
    <citation type="journal article" date="2014" name="G3 (Bethesda)">
        <title>The reference genome sequence of Saccharomyces cerevisiae: Then and now.</title>
        <authorList>
            <person name="Engel S.R."/>
            <person name="Dietrich F.S."/>
            <person name="Fisk D.G."/>
            <person name="Binkley G."/>
            <person name="Balakrishnan R."/>
            <person name="Costanzo M.C."/>
            <person name="Dwight S.S."/>
            <person name="Hitz B.C."/>
            <person name="Karra K."/>
            <person name="Nash R.S."/>
            <person name="Weng S."/>
            <person name="Wong E.D."/>
            <person name="Lloyd P."/>
            <person name="Skrzypek M.S."/>
            <person name="Miyasato S.R."/>
            <person name="Simison M."/>
            <person name="Cherry J.M."/>
        </authorList>
    </citation>
    <scope>GENOME REANNOTATION</scope>
    <source>
        <strain>ATCC 204508 / S288c</strain>
    </source>
</reference>
<reference key="4">
    <citation type="journal article" date="1997" name="Mol. Gen. Genet.">
        <title>Examination of the intron in the meiosis-specific recombination gene REC114 in Saccharomyces.</title>
        <authorList>
            <person name="Malone R.E."/>
            <person name="Pittman D.L."/>
            <person name="Nau J.J."/>
        </authorList>
    </citation>
    <scope>REVISION OF GENE MODEL</scope>
</reference>
<reference key="5">
    <citation type="journal article" date="1997" name="Genetics">
        <title>Recombination and the progression of meiosis in Saccharomyces cerevisiae.</title>
        <authorList>
            <person name="Galbraith A.M."/>
            <person name="Bullard S.A."/>
            <person name="Jiao K."/>
            <person name="Nau J.J."/>
            <person name="Malone R.E."/>
        </authorList>
    </citation>
    <scope>FUNCTION</scope>
</reference>
<reference key="6">
    <citation type="journal article" date="1999" name="Genes Cells">
        <title>High copy number suppression of the meiotic arrest caused by a dmc1 mutation: REC114 imposes an early recombination block and RAD54 promotes a DMC1-independent DSB repair pathway.</title>
        <authorList>
            <person name="Bishop D.K."/>
            <person name="Nikolski Y."/>
            <person name="Oshiro J."/>
            <person name="Chon J."/>
            <person name="Shinohara M."/>
            <person name="Chen X."/>
        </authorList>
    </citation>
    <scope>FUNCTION</scope>
</reference>
<reference key="7">
    <citation type="journal article" date="2004" name="Mol. Cell">
        <title>Antiviral protein Ski8 is a direct partner of Spo11 in meiotic DNA break formation, independent of its cytoplasmic role in RNA metabolism.</title>
        <authorList>
            <person name="Arora C."/>
            <person name="Kee K."/>
            <person name="Maleki S."/>
            <person name="Keeney S."/>
        </authorList>
    </citation>
    <scope>INTERACTION WITH MEI4; MER2 AND REC104</scope>
</reference>
<reference key="8">
    <citation type="journal article" date="2005" name="Genes Dev.">
        <title>The control of Spo11's interaction with meiotic recombination hotspots.</title>
        <authorList>
            <person name="Prieler S."/>
            <person name="Penkner A."/>
            <person name="Borde V."/>
            <person name="Klein F."/>
        </authorList>
    </citation>
    <scope>FUNCTION</scope>
</reference>
<reference key="9">
    <citation type="journal article" date="2006" name="Genetics">
        <title>Saccharomyces cerevisiae Mer2, Mei4 and Rec114 form a complex required for meiotic double-strand break formation.</title>
        <authorList>
            <person name="Li J."/>
            <person name="Hooker G.W."/>
            <person name="Roeder G.S."/>
        </authorList>
    </citation>
    <scope>IDENTIFICATION IN THE MER2-MEI4-REC114 COMPLEX</scope>
    <scope>FUNCTION OF THE MER2-MEI4-REC114 COMPLEX</scope>
    <scope>INTERACTION WITH MEI4 AND MER2</scope>
    <scope>SUBCELLULAR LOCATION</scope>
</reference>
<proteinExistence type="evidence at protein level"/>